<gene>
    <name type="primary">sas-4</name>
    <name type="ORF">CBG24501</name>
</gene>
<protein>
    <recommendedName>
        <fullName>Spindle assembly abnormal protein 4</fullName>
    </recommendedName>
</protein>
<comment type="function">
    <text evidence="1">Required for centrosome duplication. Plays a central role in determining centrosome size (By similarity).</text>
</comment>
<comment type="subcellular location">
    <subcellularLocation>
        <location evidence="1">Cytoplasm</location>
        <location evidence="1">Cytoskeleton</location>
        <location evidence="1">Microtubule organizing center</location>
        <location evidence="1">Centrosome</location>
    </subcellularLocation>
    <text evidence="1">Localizes to the centrosome throughout the cell cycle. Localizes to a tiny dot in the center of centrosome. Recruited to the centrosome once per cell cycle, at the time of organelle duplication and remains stably associated after (By similarity).</text>
</comment>
<accession>Q60JJ0</accession>
<accession>A8WKU9</accession>
<keyword id="KW-0131">Cell cycle</keyword>
<keyword id="KW-0175">Coiled coil</keyword>
<keyword id="KW-0963">Cytoplasm</keyword>
<keyword id="KW-0206">Cytoskeleton</keyword>
<keyword id="KW-0217">Developmental protein</keyword>
<keyword id="KW-1185">Reference proteome</keyword>
<evidence type="ECO:0000250" key="1"/>
<evidence type="ECO:0000255" key="2"/>
<evidence type="ECO:0000256" key="3">
    <source>
        <dbReference type="SAM" id="MobiDB-lite"/>
    </source>
</evidence>
<proteinExistence type="inferred from homology"/>
<organism>
    <name type="scientific">Caenorhabditis briggsae</name>
    <dbReference type="NCBI Taxonomy" id="6238"/>
    <lineage>
        <taxon>Eukaryota</taxon>
        <taxon>Metazoa</taxon>
        <taxon>Ecdysozoa</taxon>
        <taxon>Nematoda</taxon>
        <taxon>Chromadorea</taxon>
        <taxon>Rhabditida</taxon>
        <taxon>Rhabditina</taxon>
        <taxon>Rhabditomorpha</taxon>
        <taxon>Rhabditoidea</taxon>
        <taxon>Rhabditidae</taxon>
        <taxon>Peloderinae</taxon>
        <taxon>Caenorhabditis</taxon>
    </lineage>
</organism>
<reference key="1">
    <citation type="journal article" date="2003" name="PLoS Biol.">
        <title>The genome sequence of Caenorhabditis briggsae: a platform for comparative genomics.</title>
        <authorList>
            <person name="Stein L.D."/>
            <person name="Bao Z."/>
            <person name="Blasiar D."/>
            <person name="Blumenthal T."/>
            <person name="Brent M.R."/>
            <person name="Chen N."/>
            <person name="Chinwalla A."/>
            <person name="Clarke L."/>
            <person name="Clee C."/>
            <person name="Coghlan A."/>
            <person name="Coulson A."/>
            <person name="D'Eustachio P."/>
            <person name="Fitch D.H.A."/>
            <person name="Fulton L.A."/>
            <person name="Fulton R.E."/>
            <person name="Griffiths-Jones S."/>
            <person name="Harris T.W."/>
            <person name="Hillier L.W."/>
            <person name="Kamath R."/>
            <person name="Kuwabara P.E."/>
            <person name="Mardis E.R."/>
            <person name="Marra M.A."/>
            <person name="Miner T.L."/>
            <person name="Minx P."/>
            <person name="Mullikin J.C."/>
            <person name="Plumb R.W."/>
            <person name="Rogers J."/>
            <person name="Schein J.E."/>
            <person name="Sohrmann M."/>
            <person name="Spieth J."/>
            <person name="Stajich J.E."/>
            <person name="Wei C."/>
            <person name="Willey D."/>
            <person name="Wilson R.K."/>
            <person name="Durbin R.M."/>
            <person name="Waterston R.H."/>
        </authorList>
    </citation>
    <scope>NUCLEOTIDE SEQUENCE [LARGE SCALE GENOMIC DNA]</scope>
    <source>
        <strain>AF16</strain>
    </source>
</reference>
<feature type="chain" id="PRO_0000097591" description="Spindle assembly abnormal protein 4">
    <location>
        <begin position="1"/>
        <end position="761"/>
    </location>
</feature>
<feature type="region of interest" description="Disordered" evidence="3">
    <location>
        <begin position="1"/>
        <end position="109"/>
    </location>
</feature>
<feature type="region of interest" description="Disordered" evidence="3">
    <location>
        <begin position="164"/>
        <end position="228"/>
    </location>
</feature>
<feature type="region of interest" description="Disordered" evidence="3">
    <location>
        <begin position="252"/>
        <end position="280"/>
    </location>
</feature>
<feature type="region of interest" description="Disordered" evidence="3">
    <location>
        <begin position="479"/>
        <end position="510"/>
    </location>
</feature>
<feature type="coiled-coil region" evidence="2">
    <location>
        <begin position="129"/>
        <end position="156"/>
    </location>
</feature>
<feature type="coiled-coil region" evidence="2">
    <location>
        <begin position="326"/>
        <end position="464"/>
    </location>
</feature>
<feature type="compositionally biased region" description="Acidic residues" evidence="3">
    <location>
        <begin position="1"/>
        <end position="11"/>
    </location>
</feature>
<feature type="compositionally biased region" description="Polar residues" evidence="3">
    <location>
        <begin position="51"/>
        <end position="62"/>
    </location>
</feature>
<feature type="compositionally biased region" description="Basic and acidic residues" evidence="3">
    <location>
        <begin position="90"/>
        <end position="106"/>
    </location>
</feature>
<feature type="compositionally biased region" description="Low complexity" evidence="3">
    <location>
        <begin position="164"/>
        <end position="173"/>
    </location>
</feature>
<feature type="compositionally biased region" description="Polar residues" evidence="3">
    <location>
        <begin position="210"/>
        <end position="223"/>
    </location>
</feature>
<feature type="compositionally biased region" description="Basic and acidic residues" evidence="3">
    <location>
        <begin position="265"/>
        <end position="280"/>
    </location>
</feature>
<feature type="compositionally biased region" description="Low complexity" evidence="3">
    <location>
        <begin position="479"/>
        <end position="497"/>
    </location>
</feature>
<name>SAS4_CAEBR</name>
<dbReference type="EMBL" id="HE601095">
    <property type="protein sequence ID" value="CAP21094.2"/>
    <property type="molecule type" value="Genomic_DNA"/>
</dbReference>
<dbReference type="SMR" id="Q60JJ0"/>
<dbReference type="FunCoup" id="Q60JJ0">
    <property type="interactions" value="288"/>
</dbReference>
<dbReference type="STRING" id="6238.Q60JJ0"/>
<dbReference type="EnsemblMetazoa" id="CBG24501.1">
    <property type="protein sequence ID" value="CBG24501.1"/>
    <property type="gene ID" value="WBGene00042597"/>
</dbReference>
<dbReference type="WormBase" id="CBG24501">
    <property type="protein sequence ID" value="CBP32937"/>
    <property type="gene ID" value="WBGene00042597"/>
    <property type="gene designation" value="Cbr-sas-4"/>
</dbReference>
<dbReference type="eggNOG" id="ENOG502SYI4">
    <property type="taxonomic scope" value="Eukaryota"/>
</dbReference>
<dbReference type="HOGENOM" id="CLU_018365_0_0_1"/>
<dbReference type="InParanoid" id="Q60JJ0"/>
<dbReference type="OMA" id="EFRLRWY"/>
<dbReference type="OrthoDB" id="5857768at2759"/>
<dbReference type="Proteomes" id="UP000008549">
    <property type="component" value="Unassembled WGS sequence"/>
</dbReference>
<dbReference type="GO" id="GO:0005813">
    <property type="term" value="C:centrosome"/>
    <property type="evidence" value="ECO:0007669"/>
    <property type="project" value="UniProtKB-SubCell"/>
</dbReference>
<dbReference type="GO" id="GO:0005737">
    <property type="term" value="C:cytoplasm"/>
    <property type="evidence" value="ECO:0007669"/>
    <property type="project" value="UniProtKB-KW"/>
</dbReference>
<sequence length="761" mass="87013">MLPSENGDEDQGSQKPKRAYLRKGEGTARFRMTRRSAPLTSSPAINLPRFTPTNSAPSSARTIDSGIPHDDDTRPPTTASLPLDQPSVLESHDSGNRSESNERREEDNVEVVSAMQSYVPGDRSSSVLETCSKVSEEATQLRAEADRITAQANFINSMKSVSITPSSYSSNISGPIYQSTPKGSLRHDDLSDDPTFLPPPLVPPRNHSPQTLSSLASSGSLDTPQARPLAGNRLNMMVQNEAQTGISLLNNPRRQPMLPAHHHPSQKENVPERKAPSEHVYDEPLQIQRPHRRNREEQRQKHNLMLQLRDTIAHLDYASECVWSTRKKQEEAYAKRMKELEEDFESKMQMIQEDNTSEEERLKRERRDIERDRKILQKGIGEREKEHTQMIAKLREKLSNSESQNAKLRQDKRAVEEKMKKFIEENEKLTKDLNRNRATCQRLEKHIKQLRTEKEKDDREKEMFAKVAMNRKAAASGIATGSAASSRLPSVSSLASSMKTGSTGKGRTVSFADDEPEEQTLEAGEETMQPEFIMRPYETKQSRFGTSTMYRDSIGETTRVTSTIANGLLFEYSNGDFRWMNRQNSVEIYRIAVDKSIIVNLLQYNISFIYFFQRQLEVWRPGNNTTLISVKRREVRTELHCENGTYYTEMFDRNGRYVTKDFCRPEVFKDIPPGSACSYRDGGTRYVEYTAPEDFELVEPEYRLRWYQGKVMVCKIIKRPRCNEKTLRVQVDVTTGSGILEEVESQLKDGQSQKTTVFPWS</sequence>